<keyword id="KW-0687">Ribonucleoprotein</keyword>
<keyword id="KW-0689">Ribosomal protein</keyword>
<keyword id="KW-0694">RNA-binding</keyword>
<keyword id="KW-0699">rRNA-binding</keyword>
<proteinExistence type="inferred from homology"/>
<protein>
    <recommendedName>
        <fullName evidence="1">Small ribosomal subunit protein uS8</fullName>
    </recommendedName>
    <alternativeName>
        <fullName evidence="2">30S ribosomal protein S8</fullName>
    </alternativeName>
</protein>
<gene>
    <name evidence="1" type="primary">rpsH</name>
    <name type="ordered locus">EcSMS35_3601</name>
</gene>
<organism>
    <name type="scientific">Escherichia coli (strain SMS-3-5 / SECEC)</name>
    <dbReference type="NCBI Taxonomy" id="439855"/>
    <lineage>
        <taxon>Bacteria</taxon>
        <taxon>Pseudomonadati</taxon>
        <taxon>Pseudomonadota</taxon>
        <taxon>Gammaproteobacteria</taxon>
        <taxon>Enterobacterales</taxon>
        <taxon>Enterobacteriaceae</taxon>
        <taxon>Escherichia</taxon>
    </lineage>
</organism>
<accession>B1LHC0</accession>
<comment type="function">
    <text evidence="1">One of the primary rRNA binding proteins, it binds directly to 16S rRNA central domain where it helps coordinate assembly of the platform of the 30S subunit.</text>
</comment>
<comment type="subunit">
    <text evidence="1">Part of the 30S ribosomal subunit. Contacts proteins S5 and S12.</text>
</comment>
<comment type="similarity">
    <text evidence="1">Belongs to the universal ribosomal protein uS8 family.</text>
</comment>
<sequence length="130" mass="14127">MSMQDPIADMLTRIRNGQAANKAAVTMPSSKLKVAIANVLKEEGFIEDFKVEGDTKPELELTLKYFQGKAVVESIQRVSRPGLRIYKRKDELPKVMAGLGIAVVSTSKGVMTDRAARQAGLGGEIICYVA</sequence>
<dbReference type="EMBL" id="CP000970">
    <property type="protein sequence ID" value="ACB17143.1"/>
    <property type="molecule type" value="Genomic_DNA"/>
</dbReference>
<dbReference type="RefSeq" id="WP_000062611.1">
    <property type="nucleotide sequence ID" value="NC_010498.1"/>
</dbReference>
<dbReference type="SMR" id="B1LHC0"/>
<dbReference type="GeneID" id="93778681"/>
<dbReference type="KEGG" id="ecm:EcSMS35_3601"/>
<dbReference type="HOGENOM" id="CLU_098428_0_0_6"/>
<dbReference type="Proteomes" id="UP000007011">
    <property type="component" value="Chromosome"/>
</dbReference>
<dbReference type="GO" id="GO:1990904">
    <property type="term" value="C:ribonucleoprotein complex"/>
    <property type="evidence" value="ECO:0007669"/>
    <property type="project" value="UniProtKB-KW"/>
</dbReference>
<dbReference type="GO" id="GO:0005840">
    <property type="term" value="C:ribosome"/>
    <property type="evidence" value="ECO:0007669"/>
    <property type="project" value="UniProtKB-KW"/>
</dbReference>
<dbReference type="GO" id="GO:0019843">
    <property type="term" value="F:rRNA binding"/>
    <property type="evidence" value="ECO:0007669"/>
    <property type="project" value="UniProtKB-UniRule"/>
</dbReference>
<dbReference type="GO" id="GO:0003735">
    <property type="term" value="F:structural constituent of ribosome"/>
    <property type="evidence" value="ECO:0007669"/>
    <property type="project" value="InterPro"/>
</dbReference>
<dbReference type="GO" id="GO:0006412">
    <property type="term" value="P:translation"/>
    <property type="evidence" value="ECO:0007669"/>
    <property type="project" value="UniProtKB-UniRule"/>
</dbReference>
<dbReference type="FunFam" id="3.30.1370.30:FF:000003">
    <property type="entry name" value="30S ribosomal protein S8"/>
    <property type="match status" value="1"/>
</dbReference>
<dbReference type="FunFam" id="3.30.1490.10:FF:000001">
    <property type="entry name" value="30S ribosomal protein S8"/>
    <property type="match status" value="1"/>
</dbReference>
<dbReference type="Gene3D" id="3.30.1370.30">
    <property type="match status" value="1"/>
</dbReference>
<dbReference type="Gene3D" id="3.30.1490.10">
    <property type="match status" value="1"/>
</dbReference>
<dbReference type="HAMAP" id="MF_01302_B">
    <property type="entry name" value="Ribosomal_uS8_B"/>
    <property type="match status" value="1"/>
</dbReference>
<dbReference type="InterPro" id="IPR000630">
    <property type="entry name" value="Ribosomal_uS8"/>
</dbReference>
<dbReference type="InterPro" id="IPR047863">
    <property type="entry name" value="Ribosomal_uS8_CS"/>
</dbReference>
<dbReference type="InterPro" id="IPR035987">
    <property type="entry name" value="Ribosomal_uS8_sf"/>
</dbReference>
<dbReference type="NCBIfam" id="NF001109">
    <property type="entry name" value="PRK00136.1"/>
    <property type="match status" value="1"/>
</dbReference>
<dbReference type="PANTHER" id="PTHR11758">
    <property type="entry name" value="40S RIBOSOMAL PROTEIN S15A"/>
    <property type="match status" value="1"/>
</dbReference>
<dbReference type="Pfam" id="PF00410">
    <property type="entry name" value="Ribosomal_S8"/>
    <property type="match status" value="1"/>
</dbReference>
<dbReference type="SUPFAM" id="SSF56047">
    <property type="entry name" value="Ribosomal protein S8"/>
    <property type="match status" value="1"/>
</dbReference>
<dbReference type="PROSITE" id="PS00053">
    <property type="entry name" value="RIBOSOMAL_S8"/>
    <property type="match status" value="1"/>
</dbReference>
<reference key="1">
    <citation type="journal article" date="2008" name="J. Bacteriol.">
        <title>Insights into the environmental resistance gene pool from the genome sequence of the multidrug-resistant environmental isolate Escherichia coli SMS-3-5.</title>
        <authorList>
            <person name="Fricke W.F."/>
            <person name="Wright M.S."/>
            <person name="Lindell A.H."/>
            <person name="Harkins D.M."/>
            <person name="Baker-Austin C."/>
            <person name="Ravel J."/>
            <person name="Stepanauskas R."/>
        </authorList>
    </citation>
    <scope>NUCLEOTIDE SEQUENCE [LARGE SCALE GENOMIC DNA]</scope>
    <source>
        <strain>SMS-3-5 / SECEC</strain>
    </source>
</reference>
<name>RS8_ECOSM</name>
<evidence type="ECO:0000255" key="1">
    <source>
        <dbReference type="HAMAP-Rule" id="MF_01302"/>
    </source>
</evidence>
<evidence type="ECO:0000305" key="2"/>
<feature type="chain" id="PRO_1000140554" description="Small ribosomal subunit protein uS8">
    <location>
        <begin position="1"/>
        <end position="130"/>
    </location>
</feature>